<keyword id="KW-0004">4Fe-4S</keyword>
<keyword id="KW-1003">Cell membrane</keyword>
<keyword id="KW-0249">Electron transport</keyword>
<keyword id="KW-0408">Iron</keyword>
<keyword id="KW-0411">Iron-sulfur</keyword>
<keyword id="KW-0472">Membrane</keyword>
<keyword id="KW-0479">Metal-binding</keyword>
<keyword id="KW-1185">Reference proteome</keyword>
<keyword id="KW-0677">Repeat</keyword>
<keyword id="KW-0812">Transmembrane</keyword>
<keyword id="KW-0813">Transport</keyword>
<evidence type="ECO:0000250" key="1"/>
<evidence type="ECO:0000250" key="2">
    <source>
        <dbReference type="UniProtKB" id="P0AAJ3"/>
    </source>
</evidence>
<evidence type="ECO:0000255" key="3">
    <source>
        <dbReference type="PROSITE-ProRule" id="PRU00711"/>
    </source>
</evidence>
<sequence>MAGTAQGVQTQDVIKISATSGLTPAPQARDHKVEIAKLIDVSTCIGCKACQVGCSEWNDIRSDINAQCVGVYDNPVDLDAKAWTVMRFNEVEENDRLEWLIRKDGCMHCTEPGCLKACPAPGAIIQYANGIVDFQSDKCIGCGYCIAGCPFNIPRMNPEDNRVYKCTLCVDRVSVGQEPACVKTCPTGAIRFGSKEEMKIYAEQRVADLKSRGYENAGLYDPPGVGGTHVMYVLHHADKPELYNGLPKDPQIDLSVTLWKDVLKPVAAVAMGGLALAEVAHYLTVGPNVEEDVEDHHHEFEENKPSKGENNE</sequence>
<protein>
    <recommendedName>
        <fullName>Formate dehydrogenase iron-sulfur subunit</fullName>
    </recommendedName>
    <alternativeName>
        <fullName>Formate dehydrogenase subunit beta</fullName>
        <shortName>FDH subunit beta</shortName>
    </alternativeName>
</protein>
<dbReference type="EMBL" id="L42023">
    <property type="protein sequence ID" value="AAC21685.1"/>
    <property type="molecule type" value="Genomic_DNA"/>
</dbReference>
<dbReference type="PIR" id="A64042">
    <property type="entry name" value="A64042"/>
</dbReference>
<dbReference type="RefSeq" id="NP_438180.1">
    <property type="nucleotide sequence ID" value="NC_000907.1"/>
</dbReference>
<dbReference type="SMR" id="P44450"/>
<dbReference type="STRING" id="71421.HI_0007"/>
<dbReference type="EnsemblBacteria" id="AAC21685">
    <property type="protein sequence ID" value="AAC21685"/>
    <property type="gene ID" value="HI_0007"/>
</dbReference>
<dbReference type="KEGG" id="hin:HI_0007"/>
<dbReference type="PATRIC" id="fig|71421.8.peg.7"/>
<dbReference type="eggNOG" id="COG0437">
    <property type="taxonomic scope" value="Bacteria"/>
</dbReference>
<dbReference type="HOGENOM" id="CLU_043374_0_3_6"/>
<dbReference type="OrthoDB" id="9779457at2"/>
<dbReference type="PhylomeDB" id="P44450"/>
<dbReference type="BioCyc" id="HINF71421:G1GJ1-7-MONOMER"/>
<dbReference type="Proteomes" id="UP000000579">
    <property type="component" value="Chromosome"/>
</dbReference>
<dbReference type="GO" id="GO:0005886">
    <property type="term" value="C:plasma membrane"/>
    <property type="evidence" value="ECO:0007669"/>
    <property type="project" value="UniProtKB-SubCell"/>
</dbReference>
<dbReference type="GO" id="GO:0051539">
    <property type="term" value="F:4 iron, 4 sulfur cluster binding"/>
    <property type="evidence" value="ECO:0007669"/>
    <property type="project" value="UniProtKB-KW"/>
</dbReference>
<dbReference type="GO" id="GO:0046872">
    <property type="term" value="F:metal ion binding"/>
    <property type="evidence" value="ECO:0007669"/>
    <property type="project" value="UniProtKB-KW"/>
</dbReference>
<dbReference type="GO" id="GO:0045333">
    <property type="term" value="P:cellular respiration"/>
    <property type="evidence" value="ECO:0007669"/>
    <property type="project" value="InterPro"/>
</dbReference>
<dbReference type="GO" id="GO:0015944">
    <property type="term" value="P:formate oxidation"/>
    <property type="evidence" value="ECO:0007669"/>
    <property type="project" value="InterPro"/>
</dbReference>
<dbReference type="CDD" id="cd10558">
    <property type="entry name" value="FDH-N"/>
    <property type="match status" value="1"/>
</dbReference>
<dbReference type="Gene3D" id="3.30.70.20">
    <property type="match status" value="2"/>
</dbReference>
<dbReference type="Gene3D" id="1.20.5.480">
    <property type="entry name" value="Single helix bin"/>
    <property type="match status" value="1"/>
</dbReference>
<dbReference type="InterPro" id="IPR017896">
    <property type="entry name" value="4Fe4S_Fe-S-bd"/>
</dbReference>
<dbReference type="InterPro" id="IPR017900">
    <property type="entry name" value="4Fe4S_Fe_S_CS"/>
</dbReference>
<dbReference type="InterPro" id="IPR051555">
    <property type="entry name" value="FDH_Electron_Transfer_Unit"/>
</dbReference>
<dbReference type="InterPro" id="IPR006470">
    <property type="entry name" value="Formate_DH_bsu_Proteobacteria"/>
</dbReference>
<dbReference type="InterPro" id="IPR038384">
    <property type="entry name" value="Formate_DH_C_sf"/>
</dbReference>
<dbReference type="InterPro" id="IPR014603">
    <property type="entry name" value="Formate_DH_Fe-S_su"/>
</dbReference>
<dbReference type="InterPro" id="IPR015246">
    <property type="entry name" value="Formate_DH_TM"/>
</dbReference>
<dbReference type="NCBIfam" id="TIGR01582">
    <property type="entry name" value="FDH-beta"/>
    <property type="match status" value="1"/>
</dbReference>
<dbReference type="PANTHER" id="PTHR43545">
    <property type="entry name" value="FORMATE DEHYDROGENASE, NITRATE-INDUCIBLE, IRON-SULFUR SUBUNIT"/>
    <property type="match status" value="1"/>
</dbReference>
<dbReference type="PANTHER" id="PTHR43545:SF6">
    <property type="entry name" value="FORMATE DEHYDROGENASE, NITRATE-INDUCIBLE, IRON-SULFUR SUBUNIT"/>
    <property type="match status" value="1"/>
</dbReference>
<dbReference type="Pfam" id="PF13247">
    <property type="entry name" value="Fer4_11"/>
    <property type="match status" value="1"/>
</dbReference>
<dbReference type="Pfam" id="PF09163">
    <property type="entry name" value="Form-deh_trans"/>
    <property type="match status" value="1"/>
</dbReference>
<dbReference type="PIRSF" id="PIRSF036298">
    <property type="entry name" value="FDH_4Fe4S"/>
    <property type="match status" value="1"/>
</dbReference>
<dbReference type="SUPFAM" id="SSF54862">
    <property type="entry name" value="4Fe-4S ferredoxins"/>
    <property type="match status" value="1"/>
</dbReference>
<dbReference type="PROSITE" id="PS00198">
    <property type="entry name" value="4FE4S_FER_1"/>
    <property type="match status" value="1"/>
</dbReference>
<dbReference type="PROSITE" id="PS51379">
    <property type="entry name" value="4FE4S_FER_2"/>
    <property type="match status" value="4"/>
</dbReference>
<comment type="function">
    <text evidence="1">Allows to use formate as major electron donor during aerobic respiration. The beta chain is an electron transfer unit containing 4 cysteine clusters involved in the formation of iron-sulfur centers. Electrons are transferred from the gamma chain to the molybdenum cofactor of the alpha subunit (By similarity).</text>
</comment>
<comment type="cofactor">
    <cofactor evidence="2">
        <name>[4Fe-4S] cluster</name>
        <dbReference type="ChEBI" id="CHEBI:49883"/>
    </cofactor>
    <text evidence="2">Binds 4 [4Fe-4S] clusters per subunit.</text>
</comment>
<comment type="subunit">
    <text>Formate dehydrogenase is a membrane-bound complex, formed by subunits alpha, beta and gamma.</text>
</comment>
<comment type="subcellular location">
    <subcellularLocation>
        <location evidence="1">Cell membrane</location>
    </subcellularLocation>
</comment>
<gene>
    <name type="primary">fdxH</name>
    <name type="ordered locus">HI_0007</name>
</gene>
<proteinExistence type="inferred from homology"/>
<reference key="1">
    <citation type="journal article" date="1995" name="Science">
        <title>Whole-genome random sequencing and assembly of Haemophilus influenzae Rd.</title>
        <authorList>
            <person name="Fleischmann R.D."/>
            <person name="Adams M.D."/>
            <person name="White O."/>
            <person name="Clayton R.A."/>
            <person name="Kirkness E.F."/>
            <person name="Kerlavage A.R."/>
            <person name="Bult C.J."/>
            <person name="Tomb J.-F."/>
            <person name="Dougherty B.A."/>
            <person name="Merrick J.M."/>
            <person name="McKenney K."/>
            <person name="Sutton G.G."/>
            <person name="FitzHugh W."/>
            <person name="Fields C.A."/>
            <person name="Gocayne J.D."/>
            <person name="Scott J.D."/>
            <person name="Shirley R."/>
            <person name="Liu L.-I."/>
            <person name="Glodek A."/>
            <person name="Kelley J.M."/>
            <person name="Weidman J.F."/>
            <person name="Phillips C.A."/>
            <person name="Spriggs T."/>
            <person name="Hedblom E."/>
            <person name="Cotton M.D."/>
            <person name="Utterback T.R."/>
            <person name="Hanna M.C."/>
            <person name="Nguyen D.T."/>
            <person name="Saudek D.M."/>
            <person name="Brandon R.C."/>
            <person name="Fine L.D."/>
            <person name="Fritchman J.L."/>
            <person name="Fuhrmann J.L."/>
            <person name="Geoghagen N.S.M."/>
            <person name="Gnehm C.L."/>
            <person name="McDonald L.A."/>
            <person name="Small K.V."/>
            <person name="Fraser C.M."/>
            <person name="Smith H.O."/>
            <person name="Venter J.C."/>
        </authorList>
    </citation>
    <scope>NUCLEOTIDE SEQUENCE [LARGE SCALE GENOMIC DNA]</scope>
    <source>
        <strain>ATCC 51907 / DSM 11121 / KW20 / Rd</strain>
    </source>
</reference>
<name>FDXH_HAEIN</name>
<organism>
    <name type="scientific">Haemophilus influenzae (strain ATCC 51907 / DSM 11121 / KW20 / Rd)</name>
    <dbReference type="NCBI Taxonomy" id="71421"/>
    <lineage>
        <taxon>Bacteria</taxon>
        <taxon>Pseudomonadati</taxon>
        <taxon>Pseudomonadota</taxon>
        <taxon>Gammaproteobacteria</taxon>
        <taxon>Pasteurellales</taxon>
        <taxon>Pasteurellaceae</taxon>
        <taxon>Haemophilus</taxon>
    </lineage>
</organism>
<accession>P44450</accession>
<feature type="chain" id="PRO_0000159252" description="Formate dehydrogenase iron-sulfur subunit">
    <location>
        <begin position="1"/>
        <end position="312"/>
    </location>
</feature>
<feature type="domain" description="4Fe-4S ferredoxin-type 1" evidence="3">
    <location>
        <begin position="35"/>
        <end position="65"/>
    </location>
</feature>
<feature type="domain" description="4Fe-4S ferredoxin-type 2" evidence="3">
    <location>
        <begin position="97"/>
        <end position="129"/>
    </location>
</feature>
<feature type="domain" description="4Fe-4S ferredoxin-type 3" evidence="3">
    <location>
        <begin position="130"/>
        <end position="159"/>
    </location>
</feature>
<feature type="domain" description="4Fe-4S ferredoxin-type 4" evidence="3">
    <location>
        <begin position="164"/>
        <end position="195"/>
    </location>
</feature>
<feature type="binding site" evidence="2">
    <location>
        <position position="44"/>
    </location>
    <ligand>
        <name>[4Fe-4S] cluster</name>
        <dbReference type="ChEBI" id="CHEBI:49883"/>
        <label>1</label>
    </ligand>
</feature>
<feature type="binding site" evidence="2">
    <location>
        <position position="47"/>
    </location>
    <ligand>
        <name>[4Fe-4S] cluster</name>
        <dbReference type="ChEBI" id="CHEBI:49883"/>
        <label>1</label>
    </ligand>
</feature>
<feature type="binding site" evidence="2">
    <location>
        <position position="50"/>
    </location>
    <ligand>
        <name>[4Fe-4S] cluster</name>
        <dbReference type="ChEBI" id="CHEBI:49883"/>
        <label>1</label>
    </ligand>
</feature>
<feature type="binding site" evidence="2">
    <location>
        <position position="54"/>
    </location>
    <ligand>
        <name>[4Fe-4S] cluster</name>
        <dbReference type="ChEBI" id="CHEBI:49883"/>
        <label>2</label>
    </ligand>
</feature>
<feature type="binding site" evidence="2">
    <location>
        <position position="106"/>
    </location>
    <ligand>
        <name>[4Fe-4S] cluster</name>
        <dbReference type="ChEBI" id="CHEBI:49883"/>
        <label>3</label>
    </ligand>
</feature>
<feature type="binding site" evidence="2">
    <location>
        <position position="109"/>
    </location>
    <ligand>
        <name>[4Fe-4S] cluster</name>
        <dbReference type="ChEBI" id="CHEBI:49883"/>
        <label>3</label>
    </ligand>
</feature>
<feature type="binding site" evidence="2">
    <location>
        <position position="114"/>
    </location>
    <ligand>
        <name>[4Fe-4S] cluster</name>
        <dbReference type="ChEBI" id="CHEBI:49883"/>
        <label>3</label>
    </ligand>
</feature>
<feature type="binding site" evidence="2">
    <location>
        <position position="118"/>
    </location>
    <ligand>
        <name>[4Fe-4S] cluster</name>
        <dbReference type="ChEBI" id="CHEBI:49883"/>
        <label>4</label>
    </ligand>
</feature>
<feature type="binding site" evidence="2">
    <location>
        <position position="139"/>
    </location>
    <ligand>
        <name>[4Fe-4S] cluster</name>
        <dbReference type="ChEBI" id="CHEBI:49883"/>
        <label>4</label>
    </ligand>
</feature>
<feature type="binding site" evidence="2">
    <location>
        <position position="142"/>
    </location>
    <ligand>
        <name>[4Fe-4S] cluster</name>
        <dbReference type="ChEBI" id="CHEBI:49883"/>
        <label>4</label>
    </ligand>
</feature>
<feature type="binding site" evidence="2">
    <location>
        <position position="145"/>
    </location>
    <ligand>
        <name>[4Fe-4S] cluster</name>
        <dbReference type="ChEBI" id="CHEBI:49883"/>
        <label>4</label>
    </ligand>
</feature>
<feature type="binding site" evidence="2">
    <location>
        <position position="149"/>
    </location>
    <ligand>
        <name>[4Fe-4S] cluster</name>
        <dbReference type="ChEBI" id="CHEBI:49883"/>
        <label>3</label>
    </ligand>
</feature>
<feature type="binding site" evidence="2">
    <location>
        <position position="166"/>
    </location>
    <ligand>
        <name>[4Fe-4S] cluster</name>
        <dbReference type="ChEBI" id="CHEBI:49883"/>
        <label>2</label>
    </ligand>
</feature>
<feature type="binding site" evidence="2">
    <location>
        <position position="169"/>
    </location>
    <ligand>
        <name>[4Fe-4S] cluster</name>
        <dbReference type="ChEBI" id="CHEBI:49883"/>
        <label>2</label>
    </ligand>
</feature>
<feature type="binding site" evidence="2">
    <location>
        <position position="181"/>
    </location>
    <ligand>
        <name>[4Fe-4S] cluster</name>
        <dbReference type="ChEBI" id="CHEBI:49883"/>
        <label>2</label>
    </ligand>
</feature>
<feature type="binding site" evidence="2">
    <location>
        <position position="185"/>
    </location>
    <ligand>
        <name>[4Fe-4S] cluster</name>
        <dbReference type="ChEBI" id="CHEBI:49883"/>
        <label>1</label>
    </ligand>
</feature>